<keyword id="KW-0067">ATP-binding</keyword>
<keyword id="KW-0460">Magnesium</keyword>
<keyword id="KW-0479">Metal-binding</keyword>
<keyword id="KW-0547">Nucleotide-binding</keyword>
<keyword id="KW-0548">Nucleotidyltransferase</keyword>
<keyword id="KW-1185">Reference proteome</keyword>
<keyword id="KW-0692">RNA repair</keyword>
<keyword id="KW-0694">RNA-binding</keyword>
<keyword id="KW-0808">Transferase</keyword>
<keyword id="KW-0819">tRNA processing</keyword>
<name>CCA_LISMO</name>
<reference key="1">
    <citation type="journal article" date="2001" name="Science">
        <title>Comparative genomics of Listeria species.</title>
        <authorList>
            <person name="Glaser P."/>
            <person name="Frangeul L."/>
            <person name="Buchrieser C."/>
            <person name="Rusniok C."/>
            <person name="Amend A."/>
            <person name="Baquero F."/>
            <person name="Berche P."/>
            <person name="Bloecker H."/>
            <person name="Brandt P."/>
            <person name="Chakraborty T."/>
            <person name="Charbit A."/>
            <person name="Chetouani F."/>
            <person name="Couve E."/>
            <person name="de Daruvar A."/>
            <person name="Dehoux P."/>
            <person name="Domann E."/>
            <person name="Dominguez-Bernal G."/>
            <person name="Duchaud E."/>
            <person name="Durant L."/>
            <person name="Dussurget O."/>
            <person name="Entian K.-D."/>
            <person name="Fsihi H."/>
            <person name="Garcia-del Portillo F."/>
            <person name="Garrido P."/>
            <person name="Gautier L."/>
            <person name="Goebel W."/>
            <person name="Gomez-Lopez N."/>
            <person name="Hain T."/>
            <person name="Hauf J."/>
            <person name="Jackson D."/>
            <person name="Jones L.-M."/>
            <person name="Kaerst U."/>
            <person name="Kreft J."/>
            <person name="Kuhn M."/>
            <person name="Kunst F."/>
            <person name="Kurapkat G."/>
            <person name="Madueno E."/>
            <person name="Maitournam A."/>
            <person name="Mata Vicente J."/>
            <person name="Ng E."/>
            <person name="Nedjari H."/>
            <person name="Nordsiek G."/>
            <person name="Novella S."/>
            <person name="de Pablos B."/>
            <person name="Perez-Diaz J.-C."/>
            <person name="Purcell R."/>
            <person name="Remmel B."/>
            <person name="Rose M."/>
            <person name="Schlueter T."/>
            <person name="Simoes N."/>
            <person name="Tierrez A."/>
            <person name="Vazquez-Boland J.-A."/>
            <person name="Voss H."/>
            <person name="Wehland J."/>
            <person name="Cossart P."/>
        </authorList>
    </citation>
    <scope>NUCLEOTIDE SEQUENCE [LARGE SCALE GENOMIC DNA]</scope>
    <source>
        <strain>ATCC BAA-679 / EGD-e</strain>
    </source>
</reference>
<protein>
    <recommendedName>
        <fullName evidence="1">CCA-adding enzyme</fullName>
        <ecNumber evidence="1">2.7.7.72</ecNumber>
    </recommendedName>
    <alternativeName>
        <fullName evidence="1">CCA tRNA nucleotidyltransferase</fullName>
    </alternativeName>
    <alternativeName>
        <fullName evidence="1">tRNA CCA-pyrophosphorylase</fullName>
    </alternativeName>
    <alternativeName>
        <fullName evidence="1">tRNA adenylyl-/cytidylyl- transferase</fullName>
    </alternativeName>
    <alternativeName>
        <fullName evidence="1">tRNA nucleotidyltransferase</fullName>
    </alternativeName>
    <alternativeName>
        <fullName evidence="1">tRNA-NT</fullName>
    </alternativeName>
</protein>
<gene>
    <name evidence="1" type="primary">cca</name>
    <name type="ordered locus">lmo1905</name>
</gene>
<sequence>MNDVFLKALPVLQKLTTAGFEAYFVGGSVRDYLLNRTISDVDIATSAFPEEVKEIFQSTYDTGIAHGTVTVRENNEFYEVTTFRTEGTYEDFRRPSEVKFIRSLEEDLQRRDFTMNAIAMDEHFALHDPFSGQEAIKNKAIKAVGKASERFHEDALRMMRGVRFLSQLDFQLDSETEKALESQIGLLQHTSVERITVEWLKMIKGPAIRRAMDLLLKVEMETYLPGLKGEKKALTEFGSWDWGKRTTDDAIWLGLVVTVQPNNVNAFLKAWKLPNKTIQLVSKAYQYALKMKETWLAEELYHAGKAVFSLVNELNIIRGKENNQHKLSQAYEALPIHSKKDLAITGADLLKWSGESAGPWVKETLDKLECGVLCNEINNEKNQIKRWLGYHEE</sequence>
<feature type="chain" id="PRO_0000139043" description="CCA-adding enzyme">
    <location>
        <begin position="1"/>
        <end position="393"/>
    </location>
</feature>
<feature type="binding site" evidence="1">
    <location>
        <position position="27"/>
    </location>
    <ligand>
        <name>ATP</name>
        <dbReference type="ChEBI" id="CHEBI:30616"/>
    </ligand>
</feature>
<feature type="binding site" evidence="1">
    <location>
        <position position="27"/>
    </location>
    <ligand>
        <name>CTP</name>
        <dbReference type="ChEBI" id="CHEBI:37563"/>
    </ligand>
</feature>
<feature type="binding site" evidence="1">
    <location>
        <position position="30"/>
    </location>
    <ligand>
        <name>ATP</name>
        <dbReference type="ChEBI" id="CHEBI:30616"/>
    </ligand>
</feature>
<feature type="binding site" evidence="1">
    <location>
        <position position="30"/>
    </location>
    <ligand>
        <name>CTP</name>
        <dbReference type="ChEBI" id="CHEBI:37563"/>
    </ligand>
</feature>
<feature type="binding site" evidence="1">
    <location>
        <position position="40"/>
    </location>
    <ligand>
        <name>Mg(2+)</name>
        <dbReference type="ChEBI" id="CHEBI:18420"/>
    </ligand>
</feature>
<feature type="binding site" evidence="1">
    <location>
        <position position="42"/>
    </location>
    <ligand>
        <name>Mg(2+)</name>
        <dbReference type="ChEBI" id="CHEBI:18420"/>
    </ligand>
</feature>
<feature type="binding site" evidence="1">
    <location>
        <position position="111"/>
    </location>
    <ligand>
        <name>ATP</name>
        <dbReference type="ChEBI" id="CHEBI:30616"/>
    </ligand>
</feature>
<feature type="binding site" evidence="1">
    <location>
        <position position="111"/>
    </location>
    <ligand>
        <name>CTP</name>
        <dbReference type="ChEBI" id="CHEBI:37563"/>
    </ligand>
</feature>
<feature type="binding site" evidence="1">
    <location>
        <position position="154"/>
    </location>
    <ligand>
        <name>ATP</name>
        <dbReference type="ChEBI" id="CHEBI:30616"/>
    </ligand>
</feature>
<feature type="binding site" evidence="1">
    <location>
        <position position="154"/>
    </location>
    <ligand>
        <name>CTP</name>
        <dbReference type="ChEBI" id="CHEBI:37563"/>
    </ligand>
</feature>
<feature type="binding site" evidence="1">
    <location>
        <position position="157"/>
    </location>
    <ligand>
        <name>ATP</name>
        <dbReference type="ChEBI" id="CHEBI:30616"/>
    </ligand>
</feature>
<feature type="binding site" evidence="1">
    <location>
        <position position="157"/>
    </location>
    <ligand>
        <name>CTP</name>
        <dbReference type="ChEBI" id="CHEBI:37563"/>
    </ligand>
</feature>
<feature type="binding site" evidence="1">
    <location>
        <position position="160"/>
    </location>
    <ligand>
        <name>ATP</name>
        <dbReference type="ChEBI" id="CHEBI:30616"/>
    </ligand>
</feature>
<feature type="binding site" evidence="1">
    <location>
        <position position="160"/>
    </location>
    <ligand>
        <name>CTP</name>
        <dbReference type="ChEBI" id="CHEBI:37563"/>
    </ligand>
</feature>
<feature type="binding site" evidence="1">
    <location>
        <position position="163"/>
    </location>
    <ligand>
        <name>ATP</name>
        <dbReference type="ChEBI" id="CHEBI:30616"/>
    </ligand>
</feature>
<feature type="binding site" evidence="1">
    <location>
        <position position="163"/>
    </location>
    <ligand>
        <name>CTP</name>
        <dbReference type="ChEBI" id="CHEBI:37563"/>
    </ligand>
</feature>
<accession>Q8Y5Z8</accession>
<organism>
    <name type="scientific">Listeria monocytogenes serovar 1/2a (strain ATCC BAA-679 / EGD-e)</name>
    <dbReference type="NCBI Taxonomy" id="169963"/>
    <lineage>
        <taxon>Bacteria</taxon>
        <taxon>Bacillati</taxon>
        <taxon>Bacillota</taxon>
        <taxon>Bacilli</taxon>
        <taxon>Bacillales</taxon>
        <taxon>Listeriaceae</taxon>
        <taxon>Listeria</taxon>
    </lineage>
</organism>
<dbReference type="EC" id="2.7.7.72" evidence="1"/>
<dbReference type="EMBL" id="AL591981">
    <property type="protein sequence ID" value="CAC99983.1"/>
    <property type="molecule type" value="Genomic_DNA"/>
</dbReference>
<dbReference type="PIR" id="AI1312">
    <property type="entry name" value="AI1312"/>
</dbReference>
<dbReference type="RefSeq" id="NP_465429.1">
    <property type="nucleotide sequence ID" value="NC_003210.1"/>
</dbReference>
<dbReference type="RefSeq" id="WP_009931347.1">
    <property type="nucleotide sequence ID" value="NZ_CP149495.1"/>
</dbReference>
<dbReference type="SMR" id="Q8Y5Z8"/>
<dbReference type="STRING" id="169963.gene:17594590"/>
<dbReference type="PaxDb" id="169963-lmo1905"/>
<dbReference type="EnsemblBacteria" id="CAC99983">
    <property type="protein sequence ID" value="CAC99983"/>
    <property type="gene ID" value="CAC99983"/>
</dbReference>
<dbReference type="GeneID" id="985781"/>
<dbReference type="KEGG" id="lmo:lmo1905"/>
<dbReference type="PATRIC" id="fig|169963.11.peg.1951"/>
<dbReference type="eggNOG" id="COG0617">
    <property type="taxonomic scope" value="Bacteria"/>
</dbReference>
<dbReference type="HOGENOM" id="CLU_015961_3_0_9"/>
<dbReference type="OrthoDB" id="9805698at2"/>
<dbReference type="PhylomeDB" id="Q8Y5Z8"/>
<dbReference type="BioCyc" id="LMON169963:LMO1905-MONOMER"/>
<dbReference type="Proteomes" id="UP000000817">
    <property type="component" value="Chromosome"/>
</dbReference>
<dbReference type="GO" id="GO:0005524">
    <property type="term" value="F:ATP binding"/>
    <property type="evidence" value="ECO:0007669"/>
    <property type="project" value="UniProtKB-UniRule"/>
</dbReference>
<dbReference type="GO" id="GO:0004810">
    <property type="term" value="F:CCA tRNA nucleotidyltransferase activity"/>
    <property type="evidence" value="ECO:0007669"/>
    <property type="project" value="UniProtKB-UniRule"/>
</dbReference>
<dbReference type="GO" id="GO:0000287">
    <property type="term" value="F:magnesium ion binding"/>
    <property type="evidence" value="ECO:0007669"/>
    <property type="project" value="UniProtKB-UniRule"/>
</dbReference>
<dbReference type="GO" id="GO:0000049">
    <property type="term" value="F:tRNA binding"/>
    <property type="evidence" value="ECO:0000318"/>
    <property type="project" value="GO_Central"/>
</dbReference>
<dbReference type="GO" id="GO:0042245">
    <property type="term" value="P:RNA repair"/>
    <property type="evidence" value="ECO:0007669"/>
    <property type="project" value="UniProtKB-KW"/>
</dbReference>
<dbReference type="GO" id="GO:0001680">
    <property type="term" value="P:tRNA 3'-terminal CCA addition"/>
    <property type="evidence" value="ECO:0007669"/>
    <property type="project" value="UniProtKB-UniRule"/>
</dbReference>
<dbReference type="GO" id="GO:0008033">
    <property type="term" value="P:tRNA processing"/>
    <property type="evidence" value="ECO:0000318"/>
    <property type="project" value="GO_Central"/>
</dbReference>
<dbReference type="CDD" id="cd05398">
    <property type="entry name" value="NT_ClassII-CCAase"/>
    <property type="match status" value="1"/>
</dbReference>
<dbReference type="FunFam" id="3.30.460.10:FF:000057">
    <property type="entry name" value="CCA-adding enzyme"/>
    <property type="match status" value="1"/>
</dbReference>
<dbReference type="Gene3D" id="1.10.110.30">
    <property type="match status" value="1"/>
</dbReference>
<dbReference type="Gene3D" id="1.10.246.80">
    <property type="match status" value="1"/>
</dbReference>
<dbReference type="Gene3D" id="1.20.58.560">
    <property type="match status" value="1"/>
</dbReference>
<dbReference type="Gene3D" id="3.30.460.10">
    <property type="entry name" value="Beta Polymerase, domain 2"/>
    <property type="match status" value="1"/>
</dbReference>
<dbReference type="HAMAP" id="MF_01263">
    <property type="entry name" value="CCA_bact_type3"/>
    <property type="match status" value="1"/>
</dbReference>
<dbReference type="InterPro" id="IPR050264">
    <property type="entry name" value="Bact_CCA-adding_enz_type3_sf"/>
</dbReference>
<dbReference type="InterPro" id="IPR032810">
    <property type="entry name" value="CCA-adding_enz_C"/>
</dbReference>
<dbReference type="InterPro" id="IPR023068">
    <property type="entry name" value="CCA-adding_enz_firmicutes"/>
</dbReference>
<dbReference type="InterPro" id="IPR043519">
    <property type="entry name" value="NT_sf"/>
</dbReference>
<dbReference type="InterPro" id="IPR002646">
    <property type="entry name" value="PolA_pol_head_dom"/>
</dbReference>
<dbReference type="InterPro" id="IPR032828">
    <property type="entry name" value="PolyA_RNA-bd"/>
</dbReference>
<dbReference type="NCBIfam" id="NF009814">
    <property type="entry name" value="PRK13299.1"/>
    <property type="match status" value="1"/>
</dbReference>
<dbReference type="PANTHER" id="PTHR46173">
    <property type="entry name" value="CCA TRNA NUCLEOTIDYLTRANSFERASE 1, MITOCHONDRIAL"/>
    <property type="match status" value="1"/>
</dbReference>
<dbReference type="PANTHER" id="PTHR46173:SF1">
    <property type="entry name" value="CCA TRNA NUCLEOTIDYLTRANSFERASE 1, MITOCHONDRIAL"/>
    <property type="match status" value="1"/>
</dbReference>
<dbReference type="Pfam" id="PF01743">
    <property type="entry name" value="PolyA_pol"/>
    <property type="match status" value="1"/>
</dbReference>
<dbReference type="Pfam" id="PF12627">
    <property type="entry name" value="PolyA_pol_RNAbd"/>
    <property type="match status" value="1"/>
</dbReference>
<dbReference type="Pfam" id="PF13735">
    <property type="entry name" value="tRNA_NucTran2_2"/>
    <property type="match status" value="1"/>
</dbReference>
<dbReference type="SUPFAM" id="SSF81301">
    <property type="entry name" value="Nucleotidyltransferase"/>
    <property type="match status" value="1"/>
</dbReference>
<dbReference type="SUPFAM" id="SSF81891">
    <property type="entry name" value="Poly A polymerase C-terminal region-like"/>
    <property type="match status" value="1"/>
</dbReference>
<proteinExistence type="inferred from homology"/>
<comment type="function">
    <text evidence="1">Catalyzes the addition and repair of the essential 3'-terminal CCA sequence in tRNAs without using a nucleic acid template. Adds these three nucleotides in the order of C, C, and A to the tRNA nucleotide-73, using CTP and ATP as substrates and producing inorganic pyrophosphate. tRNA 3'-terminal CCA addition is required both for tRNA processing and repair. Also involved in tRNA surveillance by mediating tandem CCA addition to generate a CCACCA at the 3' terminus of unstable tRNAs. While stable tRNAs receive only 3'-terminal CCA, unstable tRNAs are marked with CCACCA and rapidly degraded.</text>
</comment>
<comment type="catalytic activity">
    <reaction evidence="1">
        <text>a tRNA precursor + 2 CTP + ATP = a tRNA with a 3' CCA end + 3 diphosphate</text>
        <dbReference type="Rhea" id="RHEA:14433"/>
        <dbReference type="Rhea" id="RHEA-COMP:10465"/>
        <dbReference type="Rhea" id="RHEA-COMP:10468"/>
        <dbReference type="ChEBI" id="CHEBI:30616"/>
        <dbReference type="ChEBI" id="CHEBI:33019"/>
        <dbReference type="ChEBI" id="CHEBI:37563"/>
        <dbReference type="ChEBI" id="CHEBI:74896"/>
        <dbReference type="ChEBI" id="CHEBI:83071"/>
        <dbReference type="EC" id="2.7.7.72"/>
    </reaction>
</comment>
<comment type="catalytic activity">
    <reaction evidence="1">
        <text>a tRNA with a 3' CCA end + 2 CTP + ATP = a tRNA with a 3' CCACCA end + 3 diphosphate</text>
        <dbReference type="Rhea" id="RHEA:76235"/>
        <dbReference type="Rhea" id="RHEA-COMP:10468"/>
        <dbReference type="Rhea" id="RHEA-COMP:18655"/>
        <dbReference type="ChEBI" id="CHEBI:30616"/>
        <dbReference type="ChEBI" id="CHEBI:33019"/>
        <dbReference type="ChEBI" id="CHEBI:37563"/>
        <dbReference type="ChEBI" id="CHEBI:83071"/>
        <dbReference type="ChEBI" id="CHEBI:195187"/>
    </reaction>
    <physiologicalReaction direction="left-to-right" evidence="1">
        <dbReference type="Rhea" id="RHEA:76236"/>
    </physiologicalReaction>
</comment>
<comment type="cofactor">
    <cofactor evidence="1">
        <name>Mg(2+)</name>
        <dbReference type="ChEBI" id="CHEBI:18420"/>
    </cofactor>
</comment>
<comment type="subunit">
    <text evidence="1">Homodimer.</text>
</comment>
<comment type="miscellaneous">
    <text evidence="1">A single active site specifically recognizes both ATP and CTP and is responsible for their addition.</text>
</comment>
<comment type="similarity">
    <text evidence="1">Belongs to the tRNA nucleotidyltransferase/poly(A) polymerase family. Bacterial CCA-adding enzyme type 3 subfamily.</text>
</comment>
<evidence type="ECO:0000255" key="1">
    <source>
        <dbReference type="HAMAP-Rule" id="MF_01263"/>
    </source>
</evidence>